<gene>
    <name evidence="1" type="primary">cynS</name>
    <name type="ordered locus">ECH74115_0413</name>
</gene>
<name>CYNS_ECO5E</name>
<feature type="chain" id="PRO_1000128223" description="Cyanate hydratase">
    <location>
        <begin position="1"/>
        <end position="156"/>
    </location>
</feature>
<feature type="active site" evidence="1">
    <location>
        <position position="96"/>
    </location>
</feature>
<feature type="active site" evidence="1">
    <location>
        <position position="99"/>
    </location>
</feature>
<feature type="active site" evidence="1">
    <location>
        <position position="122"/>
    </location>
</feature>
<organism>
    <name type="scientific">Escherichia coli O157:H7 (strain EC4115 / EHEC)</name>
    <dbReference type="NCBI Taxonomy" id="444450"/>
    <lineage>
        <taxon>Bacteria</taxon>
        <taxon>Pseudomonadati</taxon>
        <taxon>Pseudomonadota</taxon>
        <taxon>Gammaproteobacteria</taxon>
        <taxon>Enterobacterales</taxon>
        <taxon>Enterobacteriaceae</taxon>
        <taxon>Escherichia</taxon>
    </lineage>
</organism>
<sequence>MIQSQINRNIRLDLADAILLSKAKKDLSFAEIADGTGLAEAFVTAALLGQQALPADAARQVGAKLDLDEDAILLLQMIPLRGCIDDRIPTDPTMYRFYEMLQVYGTTLKALVHEKFGDGIISAINFKLDVKKVADPEGGERAVITLDGKYLPTKPF</sequence>
<proteinExistence type="inferred from homology"/>
<protein>
    <recommendedName>
        <fullName evidence="1">Cyanate hydratase</fullName>
        <shortName evidence="1">Cyanase</shortName>
        <ecNumber evidence="1">4.2.1.104</ecNumber>
    </recommendedName>
    <alternativeName>
        <fullName evidence="1">Cyanate hydrolase</fullName>
    </alternativeName>
    <alternativeName>
        <fullName evidence="1">Cyanate lyase</fullName>
    </alternativeName>
</protein>
<evidence type="ECO:0000255" key="1">
    <source>
        <dbReference type="HAMAP-Rule" id="MF_00535"/>
    </source>
</evidence>
<reference key="1">
    <citation type="journal article" date="2011" name="Proc. Natl. Acad. Sci. U.S.A.">
        <title>Genomic anatomy of Escherichia coli O157:H7 outbreaks.</title>
        <authorList>
            <person name="Eppinger M."/>
            <person name="Mammel M.K."/>
            <person name="Leclerc J.E."/>
            <person name="Ravel J."/>
            <person name="Cebula T.A."/>
        </authorList>
    </citation>
    <scope>NUCLEOTIDE SEQUENCE [LARGE SCALE GENOMIC DNA]</scope>
    <source>
        <strain>EC4115 / EHEC</strain>
    </source>
</reference>
<keyword id="KW-0456">Lyase</keyword>
<dbReference type="EC" id="4.2.1.104" evidence="1"/>
<dbReference type="EMBL" id="CP001164">
    <property type="protein sequence ID" value="ACI38856.1"/>
    <property type="molecule type" value="Genomic_DNA"/>
</dbReference>
<dbReference type="RefSeq" id="WP_000616247.1">
    <property type="nucleotide sequence ID" value="NC_011353.1"/>
</dbReference>
<dbReference type="SMR" id="B5Z2P3"/>
<dbReference type="GeneID" id="75170316"/>
<dbReference type="KEGG" id="ecf:ECH74115_0413"/>
<dbReference type="HOGENOM" id="CLU_103452_1_1_6"/>
<dbReference type="GO" id="GO:0008824">
    <property type="term" value="F:cyanate hydratase activity"/>
    <property type="evidence" value="ECO:0007669"/>
    <property type="project" value="UniProtKB-UniRule"/>
</dbReference>
<dbReference type="GO" id="GO:0003677">
    <property type="term" value="F:DNA binding"/>
    <property type="evidence" value="ECO:0007669"/>
    <property type="project" value="InterPro"/>
</dbReference>
<dbReference type="GO" id="GO:0009439">
    <property type="term" value="P:cyanate metabolic process"/>
    <property type="evidence" value="ECO:0007669"/>
    <property type="project" value="UniProtKB-UniRule"/>
</dbReference>
<dbReference type="CDD" id="cd00559">
    <property type="entry name" value="Cyanase_C"/>
    <property type="match status" value="1"/>
</dbReference>
<dbReference type="FunFam" id="3.30.1160.10:FF:000001">
    <property type="entry name" value="Cyanate hydratase"/>
    <property type="match status" value="1"/>
</dbReference>
<dbReference type="Gene3D" id="3.30.1160.10">
    <property type="entry name" value="Cyanate lyase, C-terminal domain"/>
    <property type="match status" value="1"/>
</dbReference>
<dbReference type="Gene3D" id="1.10.260.40">
    <property type="entry name" value="lambda repressor-like DNA-binding domains"/>
    <property type="match status" value="1"/>
</dbReference>
<dbReference type="HAMAP" id="MF_00535">
    <property type="entry name" value="Cyanate_hydrat"/>
    <property type="match status" value="1"/>
</dbReference>
<dbReference type="InterPro" id="IPR008076">
    <property type="entry name" value="Cyanase"/>
</dbReference>
<dbReference type="InterPro" id="IPR003712">
    <property type="entry name" value="Cyanate_lyase_C"/>
</dbReference>
<dbReference type="InterPro" id="IPR036581">
    <property type="entry name" value="Cyanate_lyase_C_sf"/>
</dbReference>
<dbReference type="InterPro" id="IPR048564">
    <property type="entry name" value="CYNS_N"/>
</dbReference>
<dbReference type="InterPro" id="IPR010982">
    <property type="entry name" value="Lambda_DNA-bd_dom_sf"/>
</dbReference>
<dbReference type="NCBIfam" id="TIGR00673">
    <property type="entry name" value="cynS"/>
    <property type="match status" value="1"/>
</dbReference>
<dbReference type="NCBIfam" id="NF002773">
    <property type="entry name" value="PRK02866.1"/>
    <property type="match status" value="1"/>
</dbReference>
<dbReference type="PANTHER" id="PTHR34186">
    <property type="entry name" value="CYANATE HYDRATASE"/>
    <property type="match status" value="1"/>
</dbReference>
<dbReference type="PANTHER" id="PTHR34186:SF2">
    <property type="entry name" value="CYANATE HYDRATASE"/>
    <property type="match status" value="1"/>
</dbReference>
<dbReference type="Pfam" id="PF02560">
    <property type="entry name" value="Cyanate_lyase"/>
    <property type="match status" value="1"/>
</dbReference>
<dbReference type="Pfam" id="PF21291">
    <property type="entry name" value="CYNS_N"/>
    <property type="match status" value="1"/>
</dbReference>
<dbReference type="PIRSF" id="PIRSF001263">
    <property type="entry name" value="Cyanate_hydratas"/>
    <property type="match status" value="1"/>
</dbReference>
<dbReference type="PRINTS" id="PR01693">
    <property type="entry name" value="CYANASE"/>
</dbReference>
<dbReference type="SMART" id="SM01116">
    <property type="entry name" value="Cyanate_lyase"/>
    <property type="match status" value="1"/>
</dbReference>
<dbReference type="SUPFAM" id="SSF55234">
    <property type="entry name" value="Cyanase C-terminal domain"/>
    <property type="match status" value="1"/>
</dbReference>
<dbReference type="SUPFAM" id="SSF47413">
    <property type="entry name" value="lambda repressor-like DNA-binding domains"/>
    <property type="match status" value="1"/>
</dbReference>
<accession>B5Z2P3</accession>
<comment type="function">
    <text evidence="1">Catalyzes the reaction of cyanate with bicarbonate to produce ammonia and carbon dioxide.</text>
</comment>
<comment type="catalytic activity">
    <reaction evidence="1">
        <text>cyanate + hydrogencarbonate + 3 H(+) = NH4(+) + 2 CO2</text>
        <dbReference type="Rhea" id="RHEA:11120"/>
        <dbReference type="ChEBI" id="CHEBI:15378"/>
        <dbReference type="ChEBI" id="CHEBI:16526"/>
        <dbReference type="ChEBI" id="CHEBI:17544"/>
        <dbReference type="ChEBI" id="CHEBI:28938"/>
        <dbReference type="ChEBI" id="CHEBI:29195"/>
        <dbReference type="EC" id="4.2.1.104"/>
    </reaction>
</comment>
<comment type="similarity">
    <text evidence="1">Belongs to the cyanase family.</text>
</comment>